<comment type="function">
    <text evidence="1">Catalyzes the anaerobic formation of alpha-ketobutyrate and ammonia from threonine in a two-step reaction. The first step involved a dehydration of threonine and a production of enamine intermediates (aminocrotonate), which tautomerizes to its imine form (iminobutyrate). Both intermediates are unstable and short-lived. The second step is the nonenzymatic hydrolysis of the enamine/imine intermediates to form 2-ketobutyrate and free ammonia. In the low water environment of the cell, the second step is accelerated by RidA (By similarity).</text>
</comment>
<comment type="catalytic activity">
    <reaction>
        <text>L-threonine = 2-oxobutanoate + NH4(+)</text>
        <dbReference type="Rhea" id="RHEA:22108"/>
        <dbReference type="ChEBI" id="CHEBI:16763"/>
        <dbReference type="ChEBI" id="CHEBI:28938"/>
        <dbReference type="ChEBI" id="CHEBI:57926"/>
        <dbReference type="EC" id="4.3.1.19"/>
    </reaction>
</comment>
<comment type="cofactor">
    <cofactor evidence="1">
        <name>pyridoxal 5'-phosphate</name>
        <dbReference type="ChEBI" id="CHEBI:597326"/>
    </cofactor>
</comment>
<comment type="pathway">
    <text>Amino-acid biosynthesis; L-isoleucine biosynthesis; 2-oxobutanoate from L-threonine: step 1/1.</text>
</comment>
<comment type="subunit">
    <text evidence="1">Homotetramer.</text>
</comment>
<comment type="similarity">
    <text evidence="3">Belongs to the serine/threonine dehydratase family.</text>
</comment>
<feature type="chain" id="PRO_0000185571" description="L-threonine dehydratase biosynthetic IlvA">
    <location>
        <begin position="1"/>
        <end position="507"/>
    </location>
</feature>
<feature type="domain" description="ACT-like 1" evidence="2">
    <location>
        <begin position="333"/>
        <end position="404"/>
    </location>
</feature>
<feature type="domain" description="ACT-like 2" evidence="2">
    <location>
        <begin position="427"/>
        <end position="498"/>
    </location>
</feature>
<feature type="binding site" evidence="1">
    <location>
        <position position="79"/>
    </location>
    <ligand>
        <name>pyridoxal 5'-phosphate</name>
        <dbReference type="ChEBI" id="CHEBI:597326"/>
    </ligand>
</feature>
<feature type="binding site" evidence="1">
    <location>
        <begin position="182"/>
        <end position="186"/>
    </location>
    <ligand>
        <name>pyridoxal 5'-phosphate</name>
        <dbReference type="ChEBI" id="CHEBI:597326"/>
    </ligand>
</feature>
<feature type="binding site" evidence="1">
    <location>
        <position position="309"/>
    </location>
    <ligand>
        <name>pyridoxal 5'-phosphate</name>
        <dbReference type="ChEBI" id="CHEBI:597326"/>
    </ligand>
</feature>
<feature type="modified residue" description="N6-(pyridoxal phosphate)lysine" evidence="1">
    <location>
        <position position="52"/>
    </location>
</feature>
<protein>
    <recommendedName>
        <fullName>L-threonine dehydratase biosynthetic IlvA</fullName>
        <ecNumber>4.3.1.19</ecNumber>
    </recommendedName>
    <alternativeName>
        <fullName>Threonine deaminase</fullName>
    </alternativeName>
</protein>
<gene>
    <name type="primary">ilvA</name>
    <name type="ordered locus">Bmul_0562</name>
    <name type="ordered locus">BMULJ_02699</name>
</gene>
<dbReference type="EC" id="4.3.1.19"/>
<dbReference type="EMBL" id="U40630">
    <property type="protein sequence ID" value="AAA83215.1"/>
    <property type="molecule type" value="Genomic_DNA"/>
</dbReference>
<dbReference type="EMBL" id="CP000868">
    <property type="protein sequence ID" value="ABX14257.1"/>
    <property type="molecule type" value="Genomic_DNA"/>
</dbReference>
<dbReference type="EMBL" id="AP009385">
    <property type="protein sequence ID" value="BAG44589.1"/>
    <property type="molecule type" value="Genomic_DNA"/>
</dbReference>
<dbReference type="RefSeq" id="WP_006398295.1">
    <property type="nucleotide sequence ID" value="NC_010804.1"/>
</dbReference>
<dbReference type="SMR" id="P53607"/>
<dbReference type="STRING" id="395019.BMULJ_02699"/>
<dbReference type="GeneID" id="89571284"/>
<dbReference type="KEGG" id="bmj:BMULJ_02699"/>
<dbReference type="KEGG" id="bmu:Bmul_0562"/>
<dbReference type="eggNOG" id="COG1171">
    <property type="taxonomic scope" value="Bacteria"/>
</dbReference>
<dbReference type="HOGENOM" id="CLU_021152_6_2_4"/>
<dbReference type="UniPathway" id="UPA00047">
    <property type="reaction ID" value="UER00054"/>
</dbReference>
<dbReference type="Proteomes" id="UP000008815">
    <property type="component" value="Chromosome 1"/>
</dbReference>
<dbReference type="GO" id="GO:0003941">
    <property type="term" value="F:L-serine ammonia-lyase activity"/>
    <property type="evidence" value="ECO:0007669"/>
    <property type="project" value="TreeGrafter"/>
</dbReference>
<dbReference type="GO" id="GO:0030170">
    <property type="term" value="F:pyridoxal phosphate binding"/>
    <property type="evidence" value="ECO:0007669"/>
    <property type="project" value="InterPro"/>
</dbReference>
<dbReference type="GO" id="GO:0004794">
    <property type="term" value="F:threonine deaminase activity"/>
    <property type="evidence" value="ECO:0007669"/>
    <property type="project" value="UniProtKB-EC"/>
</dbReference>
<dbReference type="GO" id="GO:0009097">
    <property type="term" value="P:isoleucine biosynthetic process"/>
    <property type="evidence" value="ECO:0007669"/>
    <property type="project" value="UniProtKB-UniPathway"/>
</dbReference>
<dbReference type="GO" id="GO:0006565">
    <property type="term" value="P:L-serine catabolic process"/>
    <property type="evidence" value="ECO:0007669"/>
    <property type="project" value="TreeGrafter"/>
</dbReference>
<dbReference type="GO" id="GO:0006567">
    <property type="term" value="P:threonine catabolic process"/>
    <property type="evidence" value="ECO:0007669"/>
    <property type="project" value="TreeGrafter"/>
</dbReference>
<dbReference type="GO" id="GO:0006566">
    <property type="term" value="P:threonine metabolic process"/>
    <property type="evidence" value="ECO:0000250"/>
    <property type="project" value="UniProtKB"/>
</dbReference>
<dbReference type="CDD" id="cd04906">
    <property type="entry name" value="ACT_ThrD-I_1"/>
    <property type="match status" value="1"/>
</dbReference>
<dbReference type="CDD" id="cd04907">
    <property type="entry name" value="ACT_ThrD-I_2"/>
    <property type="match status" value="1"/>
</dbReference>
<dbReference type="CDD" id="cd01562">
    <property type="entry name" value="Thr-dehyd"/>
    <property type="match status" value="1"/>
</dbReference>
<dbReference type="FunFam" id="3.40.1020.10:FF:000001">
    <property type="entry name" value="L-threonine dehydratase"/>
    <property type="match status" value="1"/>
</dbReference>
<dbReference type="FunFam" id="3.40.50.1100:FF:000008">
    <property type="entry name" value="L-threonine dehydratase"/>
    <property type="match status" value="1"/>
</dbReference>
<dbReference type="Gene3D" id="3.40.50.1100">
    <property type="match status" value="2"/>
</dbReference>
<dbReference type="Gene3D" id="3.40.1020.10">
    <property type="entry name" value="Biosynthetic Threonine Deaminase, Domain 3"/>
    <property type="match status" value="1"/>
</dbReference>
<dbReference type="InterPro" id="IPR045865">
    <property type="entry name" value="ACT-like_dom_sf"/>
</dbReference>
<dbReference type="InterPro" id="IPR050147">
    <property type="entry name" value="Ser/Thr_Dehydratase"/>
</dbReference>
<dbReference type="InterPro" id="IPR000634">
    <property type="entry name" value="Ser/Thr_deHydtase_PyrdxlP-BS"/>
</dbReference>
<dbReference type="InterPro" id="IPR001721">
    <property type="entry name" value="TD_ACT-like"/>
</dbReference>
<dbReference type="InterPro" id="IPR038110">
    <property type="entry name" value="TD_ACT-like_sf"/>
</dbReference>
<dbReference type="InterPro" id="IPR005787">
    <property type="entry name" value="Thr_deHydtase_biosynth"/>
</dbReference>
<dbReference type="InterPro" id="IPR001926">
    <property type="entry name" value="TrpB-like_PALP"/>
</dbReference>
<dbReference type="InterPro" id="IPR036052">
    <property type="entry name" value="TrpB-like_PALP_sf"/>
</dbReference>
<dbReference type="NCBIfam" id="TIGR01124">
    <property type="entry name" value="ilvA_2Cterm"/>
    <property type="match status" value="1"/>
</dbReference>
<dbReference type="NCBIfam" id="NF006674">
    <property type="entry name" value="PRK09224.1"/>
    <property type="match status" value="1"/>
</dbReference>
<dbReference type="NCBIfam" id="NF009130">
    <property type="entry name" value="PRK12483.1"/>
    <property type="match status" value="1"/>
</dbReference>
<dbReference type="PANTHER" id="PTHR48078:SF11">
    <property type="entry name" value="THREONINE DEHYDRATASE, MITOCHONDRIAL"/>
    <property type="match status" value="1"/>
</dbReference>
<dbReference type="PANTHER" id="PTHR48078">
    <property type="entry name" value="THREONINE DEHYDRATASE, MITOCHONDRIAL-RELATED"/>
    <property type="match status" value="1"/>
</dbReference>
<dbReference type="Pfam" id="PF00291">
    <property type="entry name" value="PALP"/>
    <property type="match status" value="1"/>
</dbReference>
<dbReference type="Pfam" id="PF00585">
    <property type="entry name" value="Thr_dehydrat_C"/>
    <property type="match status" value="2"/>
</dbReference>
<dbReference type="SUPFAM" id="SSF55021">
    <property type="entry name" value="ACT-like"/>
    <property type="match status" value="1"/>
</dbReference>
<dbReference type="SUPFAM" id="SSF53686">
    <property type="entry name" value="Tryptophan synthase beta subunit-like PLP-dependent enzymes"/>
    <property type="match status" value="1"/>
</dbReference>
<dbReference type="PROSITE" id="PS51672">
    <property type="entry name" value="ACT_LIKE"/>
    <property type="match status" value="2"/>
</dbReference>
<dbReference type="PROSITE" id="PS00165">
    <property type="entry name" value="DEHYDRATASE_SER_THR"/>
    <property type="match status" value="1"/>
</dbReference>
<evidence type="ECO:0000250" key="1"/>
<evidence type="ECO:0000255" key="2">
    <source>
        <dbReference type="PROSITE-ProRule" id="PRU01008"/>
    </source>
</evidence>
<evidence type="ECO:0000305" key="3"/>
<name>ILVA_BURM1</name>
<organism>
    <name type="scientific">Burkholderia multivorans (strain ATCC 17616 / 249)</name>
    <dbReference type="NCBI Taxonomy" id="395019"/>
    <lineage>
        <taxon>Bacteria</taxon>
        <taxon>Pseudomonadati</taxon>
        <taxon>Pseudomonadota</taxon>
        <taxon>Betaproteobacteria</taxon>
        <taxon>Burkholderiales</taxon>
        <taxon>Burkholderiaceae</taxon>
        <taxon>Burkholderia</taxon>
        <taxon>Burkholderia cepacia complex</taxon>
    </lineage>
</organism>
<keyword id="KW-0028">Amino-acid biosynthesis</keyword>
<keyword id="KW-0100">Branched-chain amino acid biosynthesis</keyword>
<keyword id="KW-0412">Isoleucine biosynthesis</keyword>
<keyword id="KW-0456">Lyase</keyword>
<keyword id="KW-0663">Pyridoxal phosphate</keyword>
<keyword id="KW-1185">Reference proteome</keyword>
<keyword id="KW-0677">Repeat</keyword>
<sequence>MASHDYLKKILTARVYDVAFETELEPARNLSARLRNPVYLKREDNQPVFSFKLRGAYNKMAHIPADALARGVITASAGNHAQGVAFSAARMGVKAVIVVPVTTPQVKVDAVRAHGGPGVEVIQAGESYSDAYAHALKVQEERGLTFVHPFDDPYVIAGQGTIAMEILRQHQGPIHAIFVPIGGGGLAAGVAAYVKAVRPEIKVIGVQAEDSCAMAQSLQAGKRVELAEVGLFADGTAVKLVGEETFRLCKEYLDGVVTVDTDALCAAIKDVFQDTRSVLEPSGALAVAGAKLYAEREGIENQTLVAVTSGANMNFDRMRFVAERAEVGEAREAVFAVTIPEERGSFKRFCSLVGDRNVTEFNYRIADAQSAHIFVGVQIRRRGESADIAANFESHGFKTADLTHDELSKEHIRYMVGGRSPLALDERLFRFEFPERPGALMKFLSSMAPDWNISLFHYRNQGADYSSILVGLQVPQADHAEFERFLAALGYPYVEESANPAYRLFLS</sequence>
<accession>P53607</accession>
<accession>A9AFB5</accession>
<reference key="1">
    <citation type="submission" date="1995-11" db="EMBL/GenBank/DDBJ databases">
        <authorList>
            <person name="Bartell J.B."/>
            <person name="Lessie T.G."/>
        </authorList>
    </citation>
    <scope>NUCLEOTIDE SEQUENCE [GENOMIC DNA]</scope>
</reference>
<reference key="2">
    <citation type="submission" date="2007-10" db="EMBL/GenBank/DDBJ databases">
        <title>Complete sequence of chromosome 1 of Burkholderia multivorans ATCC 17616.</title>
        <authorList>
            <person name="Copeland A."/>
            <person name="Lucas S."/>
            <person name="Lapidus A."/>
            <person name="Barry K."/>
            <person name="Glavina del Rio T."/>
            <person name="Dalin E."/>
            <person name="Tice H."/>
            <person name="Pitluck S."/>
            <person name="Chain P."/>
            <person name="Malfatti S."/>
            <person name="Shin M."/>
            <person name="Vergez L."/>
            <person name="Schmutz J."/>
            <person name="Larimer F."/>
            <person name="Land M."/>
            <person name="Hauser L."/>
            <person name="Kyrpides N."/>
            <person name="Kim E."/>
            <person name="Tiedje J."/>
            <person name="Richardson P."/>
        </authorList>
    </citation>
    <scope>NUCLEOTIDE SEQUENCE [LARGE SCALE GENOMIC DNA]</scope>
    <source>
        <strain>ATCC 17616 / 249</strain>
    </source>
</reference>
<reference key="3">
    <citation type="submission" date="2007-04" db="EMBL/GenBank/DDBJ databases">
        <title>Complete genome sequence of Burkholderia multivorans ATCC 17616.</title>
        <authorList>
            <person name="Ohtsubo Y."/>
            <person name="Yamashita A."/>
            <person name="Kurokawa K."/>
            <person name="Takami H."/>
            <person name="Yuhara S."/>
            <person name="Nishiyama E."/>
            <person name="Endo R."/>
            <person name="Miyazaki R."/>
            <person name="Ono A."/>
            <person name="Yano K."/>
            <person name="Ito M."/>
            <person name="Sota M."/>
            <person name="Yuji N."/>
            <person name="Hattori M."/>
            <person name="Tsuda M."/>
        </authorList>
    </citation>
    <scope>NUCLEOTIDE SEQUENCE [LARGE SCALE GENOMIC DNA]</scope>
    <source>
        <strain>ATCC 17616 / 249</strain>
    </source>
</reference>
<proteinExistence type="inferred from homology"/>